<reference key="1">
    <citation type="submission" date="2008-10" db="EMBL/GenBank/DDBJ databases">
        <title>Genome sequence of Bacillus anthracis str. CDC 684.</title>
        <authorList>
            <person name="Dodson R.J."/>
            <person name="Munk A.C."/>
            <person name="Brettin T."/>
            <person name="Bruce D."/>
            <person name="Detter C."/>
            <person name="Tapia R."/>
            <person name="Han C."/>
            <person name="Sutton G."/>
            <person name="Sims D."/>
        </authorList>
    </citation>
    <scope>NUCLEOTIDE SEQUENCE [LARGE SCALE GENOMIC DNA]</scope>
    <source>
        <strain>CDC 684 / NRRL 3495</strain>
    </source>
</reference>
<sequence>MGSSGSMVKPISGFLTALIQYPVPVVESRADIDKQIKQIIKTIHSTKAGYPGLELIVFPEYSTQGLNTKKWTTEEFLCTVPGPETDLFAEACKESEVYGVFSIMERNPDGGEPYNTAIIIDPQGEMILKYRKLNPWVPVEPWKAGDLGLPVCDGPGGSKLAVCICHDGMFPEVAREAAYKGANVLIRISGYSTQVSEQWMLTNRSNAWQNLMYTLSVNLAGYDGVFYYFGEGQVCNFDGTTLVQGHRNPWEIVTAEVYPELADQARLGWGLENNIYNLGSRGYVATPGGVKENPYTFVKDLAEGKYKVPWEDEIKVKDGTIYGYPVKKTIHS</sequence>
<dbReference type="EC" id="3.5.1.49" evidence="1"/>
<dbReference type="EMBL" id="CP001215">
    <property type="protein sequence ID" value="ACP14530.1"/>
    <property type="molecule type" value="Genomic_DNA"/>
</dbReference>
<dbReference type="RefSeq" id="WP_000535791.1">
    <property type="nucleotide sequence ID" value="NC_012581.1"/>
</dbReference>
<dbReference type="SMR" id="C3LI05"/>
<dbReference type="KEGG" id="bah:BAMEG_4192"/>
<dbReference type="HOGENOM" id="CLU_071797_0_0_9"/>
<dbReference type="GO" id="GO:0004328">
    <property type="term" value="F:formamidase activity"/>
    <property type="evidence" value="ECO:0007669"/>
    <property type="project" value="UniProtKB-UniRule"/>
</dbReference>
<dbReference type="GO" id="GO:0050126">
    <property type="term" value="F:N-carbamoylputrescine amidase activity"/>
    <property type="evidence" value="ECO:0007669"/>
    <property type="project" value="TreeGrafter"/>
</dbReference>
<dbReference type="GO" id="GO:0033388">
    <property type="term" value="P:putrescine biosynthetic process from arginine"/>
    <property type="evidence" value="ECO:0007669"/>
    <property type="project" value="TreeGrafter"/>
</dbReference>
<dbReference type="CDD" id="cd07565">
    <property type="entry name" value="aliphatic_amidase"/>
    <property type="match status" value="1"/>
</dbReference>
<dbReference type="Gene3D" id="3.60.110.10">
    <property type="entry name" value="Carbon-nitrogen hydrolase"/>
    <property type="match status" value="1"/>
</dbReference>
<dbReference type="HAMAP" id="MF_01243">
    <property type="entry name" value="Formamidase"/>
    <property type="match status" value="1"/>
</dbReference>
<dbReference type="InterPro" id="IPR050345">
    <property type="entry name" value="Aliph_Amidase/BUP"/>
</dbReference>
<dbReference type="InterPro" id="IPR003010">
    <property type="entry name" value="C-N_Hydrolase"/>
</dbReference>
<dbReference type="InterPro" id="IPR036526">
    <property type="entry name" value="C-N_Hydrolase_sf"/>
</dbReference>
<dbReference type="InterPro" id="IPR022843">
    <property type="entry name" value="Formamidase"/>
</dbReference>
<dbReference type="NCBIfam" id="NF009803">
    <property type="entry name" value="PRK13287.1"/>
    <property type="match status" value="1"/>
</dbReference>
<dbReference type="PANTHER" id="PTHR43674:SF15">
    <property type="entry name" value="FORMAMIDASE"/>
    <property type="match status" value="1"/>
</dbReference>
<dbReference type="PANTHER" id="PTHR43674">
    <property type="entry name" value="NITRILASE C965.09-RELATED"/>
    <property type="match status" value="1"/>
</dbReference>
<dbReference type="Pfam" id="PF00795">
    <property type="entry name" value="CN_hydrolase"/>
    <property type="match status" value="1"/>
</dbReference>
<dbReference type="SUPFAM" id="SSF56317">
    <property type="entry name" value="Carbon-nitrogen hydrolase"/>
    <property type="match status" value="1"/>
</dbReference>
<dbReference type="PROSITE" id="PS50263">
    <property type="entry name" value="CN_HYDROLASE"/>
    <property type="match status" value="1"/>
</dbReference>
<evidence type="ECO:0000255" key="1">
    <source>
        <dbReference type="HAMAP-Rule" id="MF_01243"/>
    </source>
</evidence>
<evidence type="ECO:0000255" key="2">
    <source>
        <dbReference type="PROSITE-ProRule" id="PRU00054"/>
    </source>
</evidence>
<comment type="function">
    <text evidence="1">Is an aliphatic amidase with a restricted substrate specificity, as it only hydrolyzes formamide.</text>
</comment>
<comment type="catalytic activity">
    <reaction evidence="1">
        <text>formamide + H2O = formate + NH4(+)</text>
        <dbReference type="Rhea" id="RHEA:21948"/>
        <dbReference type="ChEBI" id="CHEBI:15377"/>
        <dbReference type="ChEBI" id="CHEBI:15740"/>
        <dbReference type="ChEBI" id="CHEBI:16397"/>
        <dbReference type="ChEBI" id="CHEBI:28938"/>
        <dbReference type="EC" id="3.5.1.49"/>
    </reaction>
</comment>
<comment type="similarity">
    <text evidence="1">Belongs to the carbon-nitrogen hydrolase superfamily. Aliphatic amidase family.</text>
</comment>
<proteinExistence type="inferred from homology"/>
<name>AMIF_BACAC</name>
<gene>
    <name evidence="1" type="primary">amiF</name>
    <name type="ordered locus">BAMEG_4192</name>
</gene>
<keyword id="KW-0378">Hydrolase</keyword>
<organism>
    <name type="scientific">Bacillus anthracis (strain CDC 684 / NRRL 3495)</name>
    <dbReference type="NCBI Taxonomy" id="568206"/>
    <lineage>
        <taxon>Bacteria</taxon>
        <taxon>Bacillati</taxon>
        <taxon>Bacillota</taxon>
        <taxon>Bacilli</taxon>
        <taxon>Bacillales</taxon>
        <taxon>Bacillaceae</taxon>
        <taxon>Bacillus</taxon>
        <taxon>Bacillus cereus group</taxon>
    </lineage>
</organism>
<feature type="chain" id="PRO_1000165037" description="Formamidase">
    <location>
        <begin position="1"/>
        <end position="332"/>
    </location>
</feature>
<feature type="domain" description="CN hydrolase" evidence="2">
    <location>
        <begin position="14"/>
        <end position="259"/>
    </location>
</feature>
<feature type="active site" description="Proton acceptor" evidence="1">
    <location>
        <position position="60"/>
    </location>
</feature>
<feature type="active site" description="Proton donor" evidence="1">
    <location>
        <position position="132"/>
    </location>
</feature>
<feature type="active site" description="Nucleophile" evidence="1">
    <location>
        <position position="165"/>
    </location>
</feature>
<protein>
    <recommendedName>
        <fullName evidence="1">Formamidase</fullName>
        <ecNumber evidence="1">3.5.1.49</ecNumber>
    </recommendedName>
    <alternativeName>
        <fullName evidence="1">Formamide amidohydrolase</fullName>
    </alternativeName>
</protein>
<accession>C3LI05</accession>